<proteinExistence type="inferred from homology"/>
<keyword id="KW-0067">ATP-binding</keyword>
<keyword id="KW-0408">Iron</keyword>
<keyword id="KW-0411">Iron-sulfur</keyword>
<keyword id="KW-0479">Metal-binding</keyword>
<keyword id="KW-0500">Molybdenum</keyword>
<keyword id="KW-0535">Nitrogen fixation</keyword>
<keyword id="KW-0547">Nucleotide-binding</keyword>
<keyword id="KW-0560">Oxidoreductase</keyword>
<accession>P51605</accession>
<sequence>MPFKLFDVSKPIPERKEHTYVKHCGDP</sequence>
<comment type="function">
    <text>This molybdenum-iron protein is part of the nitrogenase complex that catalyzes the key enzymatic reactions in nitrogen fixation.</text>
</comment>
<comment type="catalytic activity">
    <reaction>
        <text>N2 + 8 reduced [2Fe-2S]-[ferredoxin] + 16 ATP + 16 H2O = H2 + 8 oxidized [2Fe-2S]-[ferredoxin] + 2 NH4(+) + 16 ADP + 16 phosphate + 6 H(+)</text>
        <dbReference type="Rhea" id="RHEA:21448"/>
        <dbReference type="Rhea" id="RHEA-COMP:10000"/>
        <dbReference type="Rhea" id="RHEA-COMP:10001"/>
        <dbReference type="ChEBI" id="CHEBI:15377"/>
        <dbReference type="ChEBI" id="CHEBI:15378"/>
        <dbReference type="ChEBI" id="CHEBI:17997"/>
        <dbReference type="ChEBI" id="CHEBI:18276"/>
        <dbReference type="ChEBI" id="CHEBI:28938"/>
        <dbReference type="ChEBI" id="CHEBI:30616"/>
        <dbReference type="ChEBI" id="CHEBI:33737"/>
        <dbReference type="ChEBI" id="CHEBI:33738"/>
        <dbReference type="ChEBI" id="CHEBI:43474"/>
        <dbReference type="ChEBI" id="CHEBI:456216"/>
        <dbReference type="EC" id="1.18.6.1"/>
    </reaction>
</comment>
<comment type="cofactor">
    <cofactor evidence="1">
        <name>[8Fe-7S] cluster</name>
        <dbReference type="ChEBI" id="CHEBI:21143"/>
    </cofactor>
    <text evidence="1">Binds 1 [8Fe-7S] cluster per heterodimer.</text>
</comment>
<comment type="cofactor">
    <cofactor evidence="1">
        <name>[7Fe-Mo-9S-C-homocitryl] cluster</name>
        <dbReference type="ChEBI" id="CHEBI:30409"/>
    </cofactor>
    <text evidence="1">Binds 1 [7Fe-Mo-9S-C-homocitryl] cluster per subunit.</text>
</comment>
<comment type="subunit">
    <text>Tetramer of two alpha and two beta chains. Forms complex with the iron protein (nitrogenase component 2).</text>
</comment>
<comment type="similarity">
    <text evidence="2">Belongs to the NifD/NifK/NifE/NifN family.</text>
</comment>
<name>NIFD_METIV</name>
<dbReference type="EC" id="1.18.6.1"/>
<dbReference type="EMBL" id="X56071">
    <property type="protein sequence ID" value="CAA39551.1"/>
    <property type="molecule type" value="Genomic_DNA"/>
</dbReference>
<dbReference type="SMR" id="P51605"/>
<dbReference type="GO" id="GO:0005524">
    <property type="term" value="F:ATP binding"/>
    <property type="evidence" value="ECO:0007669"/>
    <property type="project" value="UniProtKB-KW"/>
</dbReference>
<dbReference type="GO" id="GO:0051536">
    <property type="term" value="F:iron-sulfur cluster binding"/>
    <property type="evidence" value="ECO:0007669"/>
    <property type="project" value="UniProtKB-KW"/>
</dbReference>
<dbReference type="GO" id="GO:0046872">
    <property type="term" value="F:metal ion binding"/>
    <property type="evidence" value="ECO:0007669"/>
    <property type="project" value="UniProtKB-KW"/>
</dbReference>
<dbReference type="GO" id="GO:0016163">
    <property type="term" value="F:nitrogenase activity"/>
    <property type="evidence" value="ECO:0007669"/>
    <property type="project" value="UniProtKB-EC"/>
</dbReference>
<dbReference type="GO" id="GO:0009399">
    <property type="term" value="P:nitrogen fixation"/>
    <property type="evidence" value="ECO:0007669"/>
    <property type="project" value="UniProtKB-KW"/>
</dbReference>
<reference key="1">
    <citation type="journal article" date="1991" name="Res. Microbiol.">
        <title>Nucleotide sequence of nifH regions from Methanobacterium ivanovii and Methanosarcina barkeri 227 and characterization of glnB-like genes.</title>
        <authorList>
            <person name="Sibold L."/>
            <person name="Henriquet M."/>
            <person name="Possot O."/>
            <person name="Aubert J.-P."/>
        </authorList>
    </citation>
    <scope>NUCLEOTIDE SEQUENCE [GENOMIC DNA]</scope>
</reference>
<protein>
    <recommendedName>
        <fullName>Nitrogenase molybdenum-iron protein alpha chain</fullName>
        <ecNumber>1.18.6.1</ecNumber>
    </recommendedName>
    <alternativeName>
        <fullName>Dinitrogenase</fullName>
    </alternativeName>
    <alternativeName>
        <fullName>Nitrogenase component I</fullName>
    </alternativeName>
</protein>
<organism>
    <name type="scientific">Methanobacterium ivanovii</name>
    <dbReference type="NCBI Taxonomy" id="2163"/>
    <lineage>
        <taxon>Archaea</taxon>
        <taxon>Methanobacteriati</taxon>
        <taxon>Methanobacteriota</taxon>
        <taxon>Methanomada group</taxon>
        <taxon>Methanobacteria</taxon>
        <taxon>Methanobacteriales</taxon>
        <taxon>Methanobacteriaceae</taxon>
        <taxon>Methanobacterium</taxon>
    </lineage>
</organism>
<gene>
    <name type="primary">nifD</name>
</gene>
<evidence type="ECO:0000250" key="1"/>
<evidence type="ECO:0000305" key="2"/>
<feature type="chain" id="PRO_0000153070" description="Nitrogenase molybdenum-iron protein alpha chain">
    <location>
        <begin position="1"/>
        <end position="27" status="greater than"/>
    </location>
</feature>
<feature type="non-terminal residue">
    <location>
        <position position="27"/>
    </location>
</feature>